<feature type="chain" id="PRO_0000294465" description="Tetratricopeptide repeat protein 9C">
    <location>
        <begin position="1"/>
        <end position="171"/>
    </location>
</feature>
<feature type="repeat" description="TPR 1">
    <location>
        <begin position="8"/>
        <end position="41"/>
    </location>
</feature>
<feature type="repeat" description="TPR 2">
    <location>
        <begin position="72"/>
        <end position="107"/>
    </location>
</feature>
<feature type="repeat" description="TPR 3">
    <location>
        <begin position="108"/>
        <end position="141"/>
    </location>
</feature>
<feature type="splice variant" id="VSP_056610" description="In isoform 2." evidence="1">
    <original>M</original>
    <variation>MLNKEEELELLEALWSFSTSPAHSLLLPGRGGAGPIERRKPVSQAFSRPQQFLSRALLEFFGKSHPPPHRLFRKSLNVGLHYSHIPFLTTCLHFLRKRLQKGEVGLSVETSKPQVPVGGLSRKKVPQEPWATVM</variation>
    <location>
        <position position="1"/>
    </location>
</feature>
<feature type="splice variant" id="VSP_056611" description="In isoform 2." evidence="1">
    <original>ACLLQMEPVNYERVREYSQKVLERQPDNAKALYRAGVAFFHLQDYDQARHYLLAAVNRQPKDANVRRYLQLTQSELSSYHRKEKQLYLGMFG</original>
    <variation>VVK</variation>
    <location>
        <begin position="80"/>
        <end position="171"/>
    </location>
</feature>
<dbReference type="EMBL" id="AF289605">
    <property type="protein sequence ID" value="AAL55789.1"/>
    <property type="molecule type" value="mRNA"/>
</dbReference>
<dbReference type="EMBL" id="AF451992">
    <property type="protein sequence ID" value="AAP97691.1"/>
    <property type="molecule type" value="mRNA"/>
</dbReference>
<dbReference type="EMBL" id="AF451993">
    <property type="protein sequence ID" value="AAP97692.1"/>
    <property type="molecule type" value="mRNA"/>
</dbReference>
<dbReference type="EMBL" id="AP001160">
    <property type="status" value="NOT_ANNOTATED_CDS"/>
    <property type="molecule type" value="Genomic_DNA"/>
</dbReference>
<dbReference type="EMBL" id="BC032123">
    <property type="protein sequence ID" value="AAH32123.1"/>
    <property type="molecule type" value="mRNA"/>
</dbReference>
<dbReference type="EMBL" id="BC053665">
    <property type="protein sequence ID" value="AAH53665.1"/>
    <property type="molecule type" value="mRNA"/>
</dbReference>
<dbReference type="CCDS" id="CCDS8033.1">
    <molecule id="Q8N5M4-1"/>
</dbReference>
<dbReference type="RefSeq" id="NP_001305741.1">
    <molecule id="Q8N5M4-1"/>
    <property type="nucleotide sequence ID" value="NM_001318812.2"/>
</dbReference>
<dbReference type="RefSeq" id="NP_001305742.1">
    <molecule id="Q8N5M4-1"/>
    <property type="nucleotide sequence ID" value="NM_001318813.2"/>
</dbReference>
<dbReference type="RefSeq" id="NP_001305743.1">
    <property type="nucleotide sequence ID" value="NM_001318814.1"/>
</dbReference>
<dbReference type="RefSeq" id="NP_001305744.1">
    <property type="nucleotide sequence ID" value="NM_001318815.1"/>
</dbReference>
<dbReference type="RefSeq" id="NP_001305745.1">
    <property type="nucleotide sequence ID" value="NM_001318816.1"/>
</dbReference>
<dbReference type="RefSeq" id="NP_776171.1">
    <molecule id="Q8N5M4-1"/>
    <property type="nucleotide sequence ID" value="NM_173810.4"/>
</dbReference>
<dbReference type="SMR" id="Q8N5M4"/>
<dbReference type="BioGRID" id="129507">
    <property type="interactions" value="152"/>
</dbReference>
<dbReference type="FunCoup" id="Q8N5M4">
    <property type="interactions" value="2432"/>
</dbReference>
<dbReference type="IntAct" id="Q8N5M4">
    <property type="interactions" value="111"/>
</dbReference>
<dbReference type="STRING" id="9606.ENSP00000325266"/>
<dbReference type="GlyGen" id="Q8N5M4">
    <property type="glycosylation" value="1 site, 1 O-linked glycan (1 site)"/>
</dbReference>
<dbReference type="iPTMnet" id="Q8N5M4"/>
<dbReference type="PhosphoSitePlus" id="Q8N5M4"/>
<dbReference type="BioMuta" id="TTC9C"/>
<dbReference type="DMDM" id="74759911"/>
<dbReference type="jPOST" id="Q8N5M4"/>
<dbReference type="MassIVE" id="Q8N5M4"/>
<dbReference type="PaxDb" id="9606-ENSP00000325266"/>
<dbReference type="PeptideAtlas" id="Q8N5M4"/>
<dbReference type="ProteomicsDB" id="72075">
    <molecule id="Q8N5M4-1"/>
</dbReference>
<dbReference type="ProteomicsDB" id="75201"/>
<dbReference type="Pumba" id="Q8N5M4"/>
<dbReference type="Antibodypedia" id="43795">
    <property type="antibodies" value="102 antibodies from 16 providers"/>
</dbReference>
<dbReference type="DNASU" id="283237"/>
<dbReference type="Ensembl" id="ENST00000316461.9">
    <molecule id="Q8N5M4-1"/>
    <property type="protein sequence ID" value="ENSP00000325266.3"/>
    <property type="gene ID" value="ENSG00000162222.14"/>
</dbReference>
<dbReference type="Ensembl" id="ENST00000532583.1">
    <molecule id="Q8N5M4-1"/>
    <property type="protein sequence ID" value="ENSP00000434340.1"/>
    <property type="gene ID" value="ENSG00000162222.14"/>
</dbReference>
<dbReference type="GeneID" id="283237"/>
<dbReference type="KEGG" id="hsa:283237"/>
<dbReference type="MANE-Select" id="ENST00000316461.9">
    <property type="protein sequence ID" value="ENSP00000325266.3"/>
    <property type="RefSeq nucleotide sequence ID" value="NM_173810.4"/>
    <property type="RefSeq protein sequence ID" value="NP_776171.1"/>
</dbReference>
<dbReference type="UCSC" id="uc001nuy.4">
    <molecule id="Q8N5M4-1"/>
    <property type="organism name" value="human"/>
</dbReference>
<dbReference type="AGR" id="HGNC:28432"/>
<dbReference type="CTD" id="283237"/>
<dbReference type="GeneCards" id="TTC9C"/>
<dbReference type="HGNC" id="HGNC:28432">
    <property type="gene designation" value="TTC9C"/>
</dbReference>
<dbReference type="HPA" id="ENSG00000162222">
    <property type="expression patterns" value="Low tissue specificity"/>
</dbReference>
<dbReference type="neXtProt" id="NX_Q8N5M4"/>
<dbReference type="OpenTargets" id="ENSG00000162222"/>
<dbReference type="PharmGKB" id="PA142670685"/>
<dbReference type="VEuPathDB" id="HostDB:ENSG00000162222"/>
<dbReference type="eggNOG" id="ENOG502RXZG">
    <property type="taxonomic scope" value="Eukaryota"/>
</dbReference>
<dbReference type="GeneTree" id="ENSGT00940000161805"/>
<dbReference type="InParanoid" id="Q8N5M4"/>
<dbReference type="OMA" id="KIYANMS"/>
<dbReference type="OrthoDB" id="433738at2759"/>
<dbReference type="PAN-GO" id="Q8N5M4">
    <property type="GO annotations" value="0 GO annotations based on evolutionary models"/>
</dbReference>
<dbReference type="PhylomeDB" id="Q8N5M4"/>
<dbReference type="TreeFam" id="TF331917"/>
<dbReference type="PathwayCommons" id="Q8N5M4"/>
<dbReference type="SignaLink" id="Q8N5M4"/>
<dbReference type="BioGRID-ORCS" id="283237">
    <property type="hits" value="19 hits in 1164 CRISPR screens"/>
</dbReference>
<dbReference type="ChiTaRS" id="TTC9C">
    <property type="organism name" value="human"/>
</dbReference>
<dbReference type="GenomeRNAi" id="283237"/>
<dbReference type="Pharos" id="Q8N5M4">
    <property type="development level" value="Tdark"/>
</dbReference>
<dbReference type="PRO" id="PR:Q8N5M4"/>
<dbReference type="Proteomes" id="UP000005640">
    <property type="component" value="Chromosome 11"/>
</dbReference>
<dbReference type="RNAct" id="Q8N5M4">
    <property type="molecule type" value="protein"/>
</dbReference>
<dbReference type="Bgee" id="ENSG00000162222">
    <property type="expression patterns" value="Expressed in primordial germ cell in gonad and 165 other cell types or tissues"/>
</dbReference>
<dbReference type="ExpressionAtlas" id="Q8N5M4">
    <property type="expression patterns" value="baseline and differential"/>
</dbReference>
<dbReference type="Gene3D" id="1.25.40.10">
    <property type="entry name" value="Tetratricopeptide repeat domain"/>
    <property type="match status" value="1"/>
</dbReference>
<dbReference type="InterPro" id="IPR039663">
    <property type="entry name" value="AIP/AIPL1/TTC9"/>
</dbReference>
<dbReference type="InterPro" id="IPR011990">
    <property type="entry name" value="TPR-like_helical_dom_sf"/>
</dbReference>
<dbReference type="InterPro" id="IPR019734">
    <property type="entry name" value="TPR_rpt"/>
</dbReference>
<dbReference type="PANTHER" id="PTHR11242">
    <property type="entry name" value="ARYL HYDROCARBON RECEPTOR INTERACTING PROTEIN RELATED"/>
    <property type="match status" value="1"/>
</dbReference>
<dbReference type="PANTHER" id="PTHR11242:SF14">
    <property type="entry name" value="TETRATRICOPEPTIDE REPEAT PROTEIN 9C"/>
    <property type="match status" value="1"/>
</dbReference>
<dbReference type="Pfam" id="PF14559">
    <property type="entry name" value="TPR_19"/>
    <property type="match status" value="1"/>
</dbReference>
<dbReference type="SMART" id="SM00028">
    <property type="entry name" value="TPR"/>
    <property type="match status" value="3"/>
</dbReference>
<dbReference type="SUPFAM" id="SSF48452">
    <property type="entry name" value="TPR-like"/>
    <property type="match status" value="1"/>
</dbReference>
<dbReference type="PROSITE" id="PS50005">
    <property type="entry name" value="TPR"/>
    <property type="match status" value="2"/>
</dbReference>
<dbReference type="PROSITE" id="PS50293">
    <property type="entry name" value="TPR_REGION"/>
    <property type="match status" value="2"/>
</dbReference>
<name>TTC9C_HUMAN</name>
<comment type="interaction">
    <interactant intactId="EBI-2851213">
        <id>Q8N5M4</id>
    </interactant>
    <interactant intactId="EBI-10986891">
        <id>Q9Y232-2</id>
        <label>CDYL</label>
    </interactant>
    <organismsDiffer>false</organismsDiffer>
    <experiments>3</experiments>
</comment>
<comment type="interaction">
    <interactant intactId="EBI-2851213">
        <id>Q8N5M4</id>
    </interactant>
    <interactant intactId="EBI-618309">
        <id>Q08379</id>
        <label>GOLGA2</label>
    </interactant>
    <organismsDiffer>false</organismsDiffer>
    <experiments>3</experiments>
</comment>
<comment type="interaction">
    <interactant intactId="EBI-2851213">
        <id>Q8N5M4</id>
    </interactant>
    <interactant intactId="EBI-7116203">
        <id>O75031</id>
        <label>HSF2BP</label>
    </interactant>
    <organismsDiffer>false</organismsDiffer>
    <experiments>3</experiments>
</comment>
<comment type="interaction">
    <interactant intactId="EBI-2851213">
        <id>Q8N5M4</id>
    </interactant>
    <interactant intactId="EBI-948001">
        <id>Q15323</id>
        <label>KRT31</label>
    </interactant>
    <organismsDiffer>false</organismsDiffer>
    <experiments>3</experiments>
</comment>
<comment type="interaction">
    <interactant intactId="EBI-2851213">
        <id>Q8N5M4</id>
    </interactant>
    <interactant intactId="EBI-1047093">
        <id>O76011</id>
        <label>KRT34</label>
    </interactant>
    <organismsDiffer>false</organismsDiffer>
    <experiments>3</experiments>
</comment>
<comment type="interaction">
    <interactant intactId="EBI-2851213">
        <id>Q8N5M4</id>
    </interactant>
    <interactant intactId="EBI-10171697">
        <id>Q6A162</id>
        <label>KRT40</label>
    </interactant>
    <organismsDiffer>false</organismsDiffer>
    <experiments>3</experiments>
</comment>
<comment type="interaction">
    <interactant intactId="EBI-2851213">
        <id>Q8N5M4</id>
    </interactant>
    <interactant intactId="EBI-1216080">
        <id>Q9Y250</id>
        <label>LZTS1</label>
    </interactant>
    <organismsDiffer>false</organismsDiffer>
    <experiments>3</experiments>
</comment>
<comment type="interaction">
    <interactant intactId="EBI-2851213">
        <id>Q8N5M4</id>
    </interactant>
    <interactant intactId="EBI-748397">
        <id>P50222</id>
        <label>MEOX2</label>
    </interactant>
    <organismsDiffer>false</organismsDiffer>
    <experiments>3</experiments>
</comment>
<comment type="interaction">
    <interactant intactId="EBI-2851213">
        <id>Q8N5M4</id>
    </interactant>
    <interactant intactId="EBI-16439278">
        <id>Q6FHY5</id>
        <label>MEOX2</label>
    </interactant>
    <organismsDiffer>false</organismsDiffer>
    <experiments>3</experiments>
</comment>
<comment type="interaction">
    <interactant intactId="EBI-2851213">
        <id>Q8N5M4</id>
    </interactant>
    <interactant intactId="EBI-13324229">
        <id>Q9BSH3</id>
        <label>NICN1</label>
    </interactant>
    <organismsDiffer>false</organismsDiffer>
    <experiments>3</experiments>
</comment>
<comment type="interaction">
    <interactant intactId="EBI-2851213">
        <id>Q8N5M4</id>
    </interactant>
    <interactant intactId="EBI-742388">
        <id>Q9H8W4</id>
        <label>PLEKHF2</label>
    </interactant>
    <organismsDiffer>false</organismsDiffer>
    <experiments>3</experiments>
</comment>
<comment type="interaction">
    <interactant intactId="EBI-2851213">
        <id>Q8N5M4</id>
    </interactant>
    <interactant intactId="EBI-302345">
        <id>Q8ND90</id>
        <label>PNMA1</label>
    </interactant>
    <organismsDiffer>false</organismsDiffer>
    <experiments>3</experiments>
</comment>
<comment type="interaction">
    <interactant intactId="EBI-2851213">
        <id>Q8N5M4</id>
    </interactant>
    <interactant intactId="EBI-307486">
        <id>P63208</id>
        <label>SKP1</label>
    </interactant>
    <organismsDiffer>false</organismsDiffer>
    <experiments>13</experiments>
</comment>
<comment type="interaction">
    <interactant intactId="EBI-2851213">
        <id>Q8N5M4</id>
    </interactant>
    <interactant intactId="EBI-742268">
        <id>O75478</id>
        <label>TADA2A</label>
    </interactant>
    <organismsDiffer>false</organismsDiffer>
    <experiments>3</experiments>
</comment>
<comment type="interaction">
    <interactant intactId="EBI-2851213">
        <id>Q8N5M4</id>
    </interactant>
    <interactant intactId="EBI-74615">
        <id>Q9H0E2</id>
        <label>TOLLIP</label>
    </interactant>
    <organismsDiffer>false</organismsDiffer>
    <experiments>3</experiments>
</comment>
<comment type="interaction">
    <interactant intactId="EBI-2851213">
        <id>Q8N5M4</id>
    </interactant>
    <interactant intactId="EBI-2130429">
        <id>Q9BYV2</id>
        <label>TRIM54</label>
    </interactant>
    <organismsDiffer>false</organismsDiffer>
    <experiments>3</experiments>
</comment>
<comment type="interaction">
    <interactant intactId="EBI-2851213">
        <id>Q8N5M4</id>
    </interactant>
    <interactant intactId="EBI-739895">
        <id>Q8N6Y0</id>
        <label>USHBP1</label>
    </interactant>
    <organismsDiffer>false</organismsDiffer>
    <experiments>3</experiments>
</comment>
<comment type="alternative products">
    <event type="alternative splicing"/>
    <isoform>
        <id>Q8N5M4-1</id>
        <name>1</name>
        <sequence type="displayed"/>
    </isoform>
    <isoform>
        <id>Q8N5M4-2</id>
        <name>2</name>
        <sequence type="described" ref="VSP_056610 VSP_056611"/>
    </isoform>
</comment>
<comment type="similarity">
    <text evidence="2">Belongs to the TTC9 family.</text>
</comment>
<organism>
    <name type="scientific">Homo sapiens</name>
    <name type="common">Human</name>
    <dbReference type="NCBI Taxonomy" id="9606"/>
    <lineage>
        <taxon>Eukaryota</taxon>
        <taxon>Metazoa</taxon>
        <taxon>Chordata</taxon>
        <taxon>Craniata</taxon>
        <taxon>Vertebrata</taxon>
        <taxon>Euteleostomi</taxon>
        <taxon>Mammalia</taxon>
        <taxon>Eutheria</taxon>
        <taxon>Euarchontoglires</taxon>
        <taxon>Primates</taxon>
        <taxon>Haplorrhini</taxon>
        <taxon>Catarrhini</taxon>
        <taxon>Hominidae</taxon>
        <taxon>Homo</taxon>
    </lineage>
</organism>
<proteinExistence type="evidence at protein level"/>
<gene>
    <name type="primary">TTC9C</name>
</gene>
<accession>Q8N5M4</accession>
<accession>Q8WYY7</accession>
<sequence length="171" mass="20013">MEKRLQEAQLYKEEGNQRYREGKYRDAVSRYHRALLQLRGLDPSLPSPLPNLGPQGPALTPEQENILHTTQTDCYNNLAACLLQMEPVNYERVREYSQKVLERQPDNAKALYRAGVAFFHLQDYDQARHYLLAAVNRQPKDANVRRYLQLTQSELSSYHRKEKQLYLGMFG</sequence>
<reference key="1">
    <citation type="submission" date="2000-07" db="EMBL/GenBank/DDBJ databases">
        <title>Novel human cDNA clones with function of inhibiting cancer cell growth.</title>
        <authorList>
            <person name="Zhou X.M."/>
            <person name="Zhang P.P."/>
            <person name="Jiang H.Q."/>
            <person name="Huang Y."/>
            <person name="Qin W.X."/>
            <person name="Zhao X.T."/>
            <person name="Wan D.F."/>
            <person name="Gu J.R."/>
        </authorList>
    </citation>
    <scope>NUCLEOTIDE SEQUENCE [MRNA] (ISOFORM 2)</scope>
</reference>
<reference key="2">
    <citation type="submission" date="2001-11" db="EMBL/GenBank/DDBJ databases">
        <authorList>
            <person name="Zan Q."/>
            <person name="Guo J.H."/>
            <person name="Yu L."/>
        </authorList>
    </citation>
    <scope>NUCLEOTIDE SEQUENCE [MRNA] (ISOFORM 1)</scope>
    <source>
        <tissue>Brain</tissue>
    </source>
</reference>
<reference key="3">
    <citation type="journal article" date="2006" name="Nature">
        <title>Human chromosome 11 DNA sequence and analysis including novel gene identification.</title>
        <authorList>
            <person name="Taylor T.D."/>
            <person name="Noguchi H."/>
            <person name="Totoki Y."/>
            <person name="Toyoda A."/>
            <person name="Kuroki Y."/>
            <person name="Dewar K."/>
            <person name="Lloyd C."/>
            <person name="Itoh T."/>
            <person name="Takeda T."/>
            <person name="Kim D.-W."/>
            <person name="She X."/>
            <person name="Barlow K.F."/>
            <person name="Bloom T."/>
            <person name="Bruford E."/>
            <person name="Chang J.L."/>
            <person name="Cuomo C.A."/>
            <person name="Eichler E."/>
            <person name="FitzGerald M.G."/>
            <person name="Jaffe D.B."/>
            <person name="LaButti K."/>
            <person name="Nicol R."/>
            <person name="Park H.-S."/>
            <person name="Seaman C."/>
            <person name="Sougnez C."/>
            <person name="Yang X."/>
            <person name="Zimmer A.R."/>
            <person name="Zody M.C."/>
            <person name="Birren B.W."/>
            <person name="Nusbaum C."/>
            <person name="Fujiyama A."/>
            <person name="Hattori M."/>
            <person name="Rogers J."/>
            <person name="Lander E.S."/>
            <person name="Sakaki Y."/>
        </authorList>
    </citation>
    <scope>NUCLEOTIDE SEQUENCE [LARGE SCALE GENOMIC DNA]</scope>
</reference>
<reference key="4">
    <citation type="journal article" date="2004" name="Genome Res.">
        <title>The status, quality, and expansion of the NIH full-length cDNA project: the Mammalian Gene Collection (MGC).</title>
        <authorList>
            <consortium name="The MGC Project Team"/>
        </authorList>
    </citation>
    <scope>NUCLEOTIDE SEQUENCE [LARGE SCALE MRNA] (ISOFORM 1)</scope>
    <source>
        <tissue>B-cell</tissue>
        <tissue>Eye</tissue>
    </source>
</reference>
<reference key="5">
    <citation type="journal article" date="2011" name="BMC Syst. Biol.">
        <title>Initial characterization of the human central proteome.</title>
        <authorList>
            <person name="Burkard T.R."/>
            <person name="Planyavsky M."/>
            <person name="Kaupe I."/>
            <person name="Breitwieser F.P."/>
            <person name="Buerckstuemmer T."/>
            <person name="Bennett K.L."/>
            <person name="Superti-Furga G."/>
            <person name="Colinge J."/>
        </authorList>
    </citation>
    <scope>IDENTIFICATION BY MASS SPECTROMETRY [LARGE SCALE ANALYSIS]</scope>
</reference>
<evidence type="ECO:0000303" key="1">
    <source ref="1"/>
</evidence>
<evidence type="ECO:0000305" key="2"/>
<keyword id="KW-0025">Alternative splicing</keyword>
<keyword id="KW-1267">Proteomics identification</keyword>
<keyword id="KW-1185">Reference proteome</keyword>
<keyword id="KW-0677">Repeat</keyword>
<keyword id="KW-0802">TPR repeat</keyword>
<protein>
    <recommendedName>
        <fullName>Tetratricopeptide repeat protein 9C</fullName>
        <shortName>TPR repeat protein 9C</shortName>
    </recommendedName>
</protein>